<organism>
    <name type="scientific">Nicotiana benthamiana</name>
    <dbReference type="NCBI Taxonomy" id="4100"/>
    <lineage>
        <taxon>Eukaryota</taxon>
        <taxon>Viridiplantae</taxon>
        <taxon>Streptophyta</taxon>
        <taxon>Embryophyta</taxon>
        <taxon>Tracheophyta</taxon>
        <taxon>Spermatophyta</taxon>
        <taxon>Magnoliopsida</taxon>
        <taxon>eudicotyledons</taxon>
        <taxon>Gunneridae</taxon>
        <taxon>Pentapetalae</taxon>
        <taxon>asterids</taxon>
        <taxon>lamiids</taxon>
        <taxon>Solanales</taxon>
        <taxon>Solanaceae</taxon>
        <taxon>Nicotianoideae</taxon>
        <taxon>Nicotianeae</taxon>
        <taxon>Nicotiana</taxon>
    </lineage>
</organism>
<comment type="function">
    <text evidence="3">Transcriptional regulator required for Agrobacterium-mediated stable genetic transformation by T-DNA integration in host genome, but not for T-DNA transient expression.</text>
</comment>
<comment type="subunit">
    <text evidence="1 3">Binds to VIP1 (By similarity). Interacts with Agrobacterium tumefaciens VirE2. Forms a complex made of Agrobacterium VirE2, VIP1, VIP2 and single-stranded DNA (ssDNA).</text>
</comment>
<comment type="subcellular location">
    <subcellularLocation>
        <location evidence="1">Nucleus</location>
    </subcellularLocation>
</comment>
<comment type="induction">
    <text evidence="3">Upon infection with a T-DNA transfer-competent Agrobacterium strain.</text>
</comment>
<comment type="disruption phenotype">
    <text evidence="3">Impaired stable genetic transformation by Agrobacterium T-DNA.</text>
</comment>
<comment type="similarity">
    <text evidence="4">Belongs to the CNOT2/3/5 family.</text>
</comment>
<gene>
    <name type="primary">VIP2</name>
</gene>
<dbReference type="EMBL" id="DQ000202">
    <property type="protein sequence ID" value="AAY15746.1"/>
    <property type="molecule type" value="mRNA"/>
</dbReference>
<dbReference type="SMR" id="Q52JK6"/>
<dbReference type="GO" id="GO:0030015">
    <property type="term" value="C:CCR4-NOT core complex"/>
    <property type="evidence" value="ECO:0007669"/>
    <property type="project" value="InterPro"/>
</dbReference>
<dbReference type="GO" id="GO:0005634">
    <property type="term" value="C:nucleus"/>
    <property type="evidence" value="ECO:0000250"/>
    <property type="project" value="UniProtKB"/>
</dbReference>
<dbReference type="GO" id="GO:0015074">
    <property type="term" value="P:DNA integration"/>
    <property type="evidence" value="ECO:0000315"/>
    <property type="project" value="UniProtKB"/>
</dbReference>
<dbReference type="GO" id="GO:0006355">
    <property type="term" value="P:regulation of DNA-templated transcription"/>
    <property type="evidence" value="ECO:0000250"/>
    <property type="project" value="UniProtKB"/>
</dbReference>
<dbReference type="FunFam" id="2.30.30.1020:FF:000004">
    <property type="entry name" value="probable NOT transcription complex subunit VIP2 isoform X1"/>
    <property type="match status" value="1"/>
</dbReference>
<dbReference type="Gene3D" id="2.30.30.1020">
    <property type="entry name" value="CCR4-NOT complex subunit 2/3/5, C-terminal domain"/>
    <property type="match status" value="1"/>
</dbReference>
<dbReference type="InterPro" id="IPR038635">
    <property type="entry name" value="CCR4-NOT_su2/3/5_C_sf"/>
</dbReference>
<dbReference type="InterPro" id="IPR040168">
    <property type="entry name" value="Not2/3/5"/>
</dbReference>
<dbReference type="InterPro" id="IPR007282">
    <property type="entry name" value="NOT2/3/5_C"/>
</dbReference>
<dbReference type="PANTHER" id="PTHR23326">
    <property type="entry name" value="CCR4 NOT-RELATED"/>
    <property type="match status" value="1"/>
</dbReference>
<dbReference type="Pfam" id="PF04153">
    <property type="entry name" value="NOT2_3_5_C"/>
    <property type="match status" value="1"/>
</dbReference>
<name>VIP2_NICBE</name>
<sequence>MQGTLTSRNTAINNVPSSGVQQSGNNLSGGRFVPNNLPSALSQIPQGNSHGHSGMTSRGGTSVVGNPGYSSNTNGVGGSIPGILPTFAAIGNRSSVPGLGVSPILGNAGPRMTNSVGNIVGGGNIGRSISSGAGLSVPGLASRLNMNANSGSGNLNVQGPNRLMSGVLQQASPQVLSMLGNSYPAGGPLSQNHVQAIGNFNSMGLLNDVNSNDGSPFDINDFPQLSSRPSSAGGPQGQLGSLRKQGLSPIVQQNQEFSIQNEDFPALPGFKGGNADYAMDPHQKEQLHDNTLSMMQQQHFSMGRSAGFNLGGTYSSNRPQQQLQHAPSVSSGGVSFSNINNQDLLSLHGSDVFQSSHSSYQQQGGGPPGIGLRPLNSSGTVSGIGSYDQLIQQYQQHQGQSQFRLQQMSTLGQPFRDQSLKSMQSQVAPDPFGMLGLLSVIRMSDPDLTSLALGIDLTTLGLNLNSAENLYKTFGSPWSDEPAKGDPEFTVPQCYYAKQPPPLNQAYFSKFQLDTLFYIFYSMPKDEAQLYAANELYNRGWFYHREHRLWFMRVANMEPLVKTNAYERGSYICFDPNTWETIHKDNFVLHCEMLEKRPVLPQH</sequence>
<keyword id="KW-0192">Crown gall tumor</keyword>
<keyword id="KW-0539">Nucleus</keyword>
<keyword id="KW-0804">Transcription</keyword>
<keyword id="KW-0805">Transcription regulation</keyword>
<proteinExistence type="evidence at protein level"/>
<feature type="chain" id="PRO_0000405595" description="Probable NOT transcription complex subunit VIP2">
    <location>
        <begin position="1" status="less than"/>
        <end position="603"/>
    </location>
</feature>
<feature type="region of interest" description="Disordered" evidence="2">
    <location>
        <begin position="1"/>
        <end position="70"/>
    </location>
</feature>
<feature type="region of interest" description="Disordered" evidence="2">
    <location>
        <begin position="212"/>
        <end position="242"/>
    </location>
</feature>
<feature type="region of interest" description="Disordered" evidence="2">
    <location>
        <begin position="306"/>
        <end position="335"/>
    </location>
</feature>
<feature type="region of interest" description="Disordered" evidence="2">
    <location>
        <begin position="355"/>
        <end position="377"/>
    </location>
</feature>
<feature type="compositionally biased region" description="Polar residues" evidence="2">
    <location>
        <begin position="1"/>
        <end position="28"/>
    </location>
</feature>
<feature type="compositionally biased region" description="Polar residues" evidence="2">
    <location>
        <begin position="36"/>
        <end position="70"/>
    </location>
</feature>
<feature type="compositionally biased region" description="Polar residues" evidence="2">
    <location>
        <begin position="312"/>
        <end position="335"/>
    </location>
</feature>
<feature type="non-terminal residue">
    <location>
        <position position="1"/>
    </location>
</feature>
<reference key="1">
    <citation type="journal article" date="2007" name="Plant Cell">
        <title>Arabidopsis VIRE2 INTERACTING PROTEIN2 is required for Agrobacterium T-DNA integration in plants.</title>
        <authorList>
            <person name="Anand A."/>
            <person name="Krichevsky A."/>
            <person name="Schornack S."/>
            <person name="Lahaye T."/>
            <person name="Tzfira T."/>
            <person name="Tang Y."/>
            <person name="Citovsky V."/>
            <person name="Mysore K.S."/>
        </authorList>
    </citation>
    <scope>NUCLEOTIDE SEQUENCE [MRNA]</scope>
    <scope>FUNCTION</scope>
    <scope>DISRUPTION PHENOTYPE</scope>
    <scope>INTERACTION WITH AGROBACTERIUM VIRE2</scope>
    <scope>INDUCTION BY AGROBACTERIUM</scope>
</reference>
<protein>
    <recommendedName>
        <fullName>Probable NOT transcription complex subunit VIP2</fullName>
    </recommendedName>
    <alternativeName>
        <fullName>Protein VIRE2 INTERACTING PROTEIN2</fullName>
        <shortName>NbVIP2</shortName>
    </alternativeName>
</protein>
<evidence type="ECO:0000250" key="1"/>
<evidence type="ECO:0000256" key="2">
    <source>
        <dbReference type="SAM" id="MobiDB-lite"/>
    </source>
</evidence>
<evidence type="ECO:0000269" key="3">
    <source>
    </source>
</evidence>
<evidence type="ECO:0000305" key="4"/>
<accession>Q52JK6</accession>